<dbReference type="EC" id="3.1.1.74" evidence="7"/>
<dbReference type="EMBL" id="EF108302">
    <property type="protein sequence ID" value="ABN48556.1"/>
    <property type="molecule type" value="Genomic_DNA"/>
</dbReference>
<dbReference type="SMR" id="A8QPD8"/>
<dbReference type="ESTHER" id="triha-a8qpd8">
    <property type="family name" value="Cutinase"/>
</dbReference>
<dbReference type="BRENDA" id="3.1.1.74">
    <property type="organism ID" value="6445"/>
</dbReference>
<dbReference type="GO" id="GO:0005576">
    <property type="term" value="C:extracellular region"/>
    <property type="evidence" value="ECO:0007669"/>
    <property type="project" value="UniProtKB-SubCell"/>
</dbReference>
<dbReference type="GO" id="GO:0050525">
    <property type="term" value="F:cutinase activity"/>
    <property type="evidence" value="ECO:0007669"/>
    <property type="project" value="UniProtKB-EC"/>
</dbReference>
<dbReference type="GO" id="GO:0016052">
    <property type="term" value="P:carbohydrate catabolic process"/>
    <property type="evidence" value="ECO:0007669"/>
    <property type="project" value="TreeGrafter"/>
</dbReference>
<dbReference type="Gene3D" id="3.40.50.1820">
    <property type="entry name" value="alpha/beta hydrolase"/>
    <property type="match status" value="1"/>
</dbReference>
<dbReference type="InterPro" id="IPR029058">
    <property type="entry name" value="AB_hydrolase_fold"/>
</dbReference>
<dbReference type="InterPro" id="IPR000675">
    <property type="entry name" value="Cutinase/axe"/>
</dbReference>
<dbReference type="InterPro" id="IPR043580">
    <property type="entry name" value="CUTINASE_1"/>
</dbReference>
<dbReference type="InterPro" id="IPR043579">
    <property type="entry name" value="CUTINASE_2"/>
</dbReference>
<dbReference type="InterPro" id="IPR011150">
    <property type="entry name" value="Cutinase_monf"/>
</dbReference>
<dbReference type="PANTHER" id="PTHR48250:SF1">
    <property type="entry name" value="CUTINASE"/>
    <property type="match status" value="1"/>
</dbReference>
<dbReference type="PANTHER" id="PTHR48250">
    <property type="entry name" value="CUTINASE 2-RELATED"/>
    <property type="match status" value="1"/>
</dbReference>
<dbReference type="Pfam" id="PF01083">
    <property type="entry name" value="Cutinase"/>
    <property type="match status" value="1"/>
</dbReference>
<dbReference type="PRINTS" id="PR00129">
    <property type="entry name" value="CUTINASE"/>
</dbReference>
<dbReference type="SMART" id="SM01110">
    <property type="entry name" value="Cutinase"/>
    <property type="match status" value="1"/>
</dbReference>
<dbReference type="SUPFAM" id="SSF53474">
    <property type="entry name" value="alpha/beta-Hydrolases"/>
    <property type="match status" value="1"/>
</dbReference>
<dbReference type="PROSITE" id="PS00155">
    <property type="entry name" value="CUTINASE_1"/>
    <property type="match status" value="1"/>
</dbReference>
<dbReference type="PROSITE" id="PS00931">
    <property type="entry name" value="CUTINASE_2"/>
    <property type="match status" value="1"/>
</dbReference>
<comment type="function">
    <text evidence="4">Catalyzes the hydrolysis of complex carboxylic polyesters found in the cell wall of plants (PubMed:18987860). May degrade cutin, a macromolecule that forms the structure of the plant cuticle (PubMed:18987860). May also degrade suberin, a specialized macromolecule found in the cell wall of various plant tissues (PubMed:18987860).</text>
</comment>
<comment type="catalytic activity">
    <reaction evidence="7">
        <text>cutin + H2O = cutin monomers.</text>
        <dbReference type="EC" id="3.1.1.74"/>
    </reaction>
</comment>
<comment type="biophysicochemical properties">
    <kinetics>
        <KM evidence="4">0.33 mM for p-nitrophenyl acetate (at pH 8 and 25 degrees Celsius)</KM>
        <KM evidence="4">0.57 mM for p-nitrophenyl butyrate (at pH 8 and 25 degrees Celsius)</KM>
        <KM evidence="4">0.82 mM for p-nitrophenyl valerate (at pH 8 and 25 degrees Celsius)</KM>
        <KM evidence="4">0.085 mM for p-nitrophenyl palmitate (at pH 8 and 37 degrees Celsius)</KM>
    </kinetics>
    <phDependence>
        <text evidence="4">Optimum pH is 7.5-8.</text>
    </phDependence>
</comment>
<comment type="subcellular location">
    <subcellularLocation>
        <location evidence="7">Secreted</location>
    </subcellularLocation>
</comment>
<comment type="induction">
    <text evidence="4">Induced during growth on olive oil (PubMed:18987860). Induced during growth on the lipidic carbon source 16-hydroxyhexadecanoic acid (synthetic cutin monomer) (PubMed:18987860). Induced during growth on plant material (PubMed:18987860). Induced during growth on pectin (PubMed:18987860). Repressed during growth on glucose carbon source (PubMed:18987860).</text>
</comment>
<comment type="PTM">
    <text evidence="2">The 2 disulfide bonds play a critical role in holding the catalytic residues in juxta-position; reduction of the disulfide bridges results in the complete inactivation of the enzyme.</text>
</comment>
<comment type="similarity">
    <text evidence="6">Belongs to the cutinase family.</text>
</comment>
<evidence type="ECO:0000250" key="1">
    <source>
        <dbReference type="UniProtKB" id="P00590"/>
    </source>
</evidence>
<evidence type="ECO:0000250" key="2">
    <source>
        <dbReference type="UniProtKB" id="P11373"/>
    </source>
</evidence>
<evidence type="ECO:0000255" key="3">
    <source>
        <dbReference type="RuleBase" id="RU361263"/>
    </source>
</evidence>
<evidence type="ECO:0000269" key="4">
    <source>
    </source>
</evidence>
<evidence type="ECO:0000303" key="5">
    <source>
    </source>
</evidence>
<evidence type="ECO:0000305" key="6"/>
<evidence type="ECO:0000305" key="7">
    <source>
    </source>
</evidence>
<evidence type="ECO:0000312" key="8">
    <source>
        <dbReference type="EMBL" id="ABN48556.1"/>
    </source>
</evidence>
<accession>A8QPD8</accession>
<organism evidence="8">
    <name type="scientific">Trichoderma harzianum</name>
    <name type="common">Hypocrea lixii</name>
    <dbReference type="NCBI Taxonomy" id="5544"/>
    <lineage>
        <taxon>Eukaryota</taxon>
        <taxon>Fungi</taxon>
        <taxon>Dikarya</taxon>
        <taxon>Ascomycota</taxon>
        <taxon>Pezizomycotina</taxon>
        <taxon>Sordariomycetes</taxon>
        <taxon>Hypocreomycetidae</taxon>
        <taxon>Hypocreales</taxon>
        <taxon>Hypocreaceae</taxon>
        <taxon>Trichoderma</taxon>
    </lineage>
</organism>
<feature type="signal peptide" evidence="3">
    <location>
        <begin position="1"/>
        <end position="17"/>
    </location>
</feature>
<feature type="chain" id="PRO_5005117511" description="Cutinase cut1" evidence="3">
    <location>
        <begin position="18"/>
        <end position="248"/>
    </location>
</feature>
<feature type="active site" description="Nucleophile" evidence="1">
    <location>
        <position position="164"/>
    </location>
</feature>
<feature type="active site" evidence="1">
    <location>
        <position position="216"/>
    </location>
</feature>
<feature type="active site" description="Proton donor/acceptor" evidence="1">
    <location>
        <position position="229"/>
    </location>
</feature>
<feature type="site" description="Transition state stabilizer" evidence="1">
    <location>
        <position position="90"/>
    </location>
</feature>
<feature type="site" description="Transition state stabilizer" evidence="1">
    <location>
        <position position="165"/>
    </location>
</feature>
<feature type="disulfide bond" evidence="1">
    <location>
        <begin position="79"/>
        <end position="153"/>
    </location>
</feature>
<feature type="disulfide bond" evidence="1">
    <location>
        <begin position="212"/>
        <end position="219"/>
    </location>
</feature>
<reference evidence="6" key="1">
    <citation type="journal article" date="2008" name="Curr. Genet.">
        <title>Cloning and characterization of the Thcut1 gene encoding a cutinase of Trichoderma harzianum T34.</title>
        <authorList>
            <person name="Rubio M.B."/>
            <person name="Cardoza R.E."/>
            <person name="Hermosa R."/>
            <person name="Gutierrez S."/>
            <person name="Monte E."/>
        </authorList>
    </citation>
    <scope>NUCLEOTIDE SEQUENCE [GENOMIC DNA]</scope>
    <scope>FUNCTION</scope>
    <scope>CATALYTIC ACTIVITY</scope>
    <scope>BIOPHYSICOCHEMICAL PROPERTIES</scope>
    <scope>SUBCELLULAR LOCATION</scope>
    <scope>INDUCTION</scope>
    <source>
        <strain evidence="5">ATCC 48131 / CBS 354.33 / CECT 2413 / VTT D-80150</strain>
    </source>
</reference>
<keyword id="KW-1015">Disulfide bond</keyword>
<keyword id="KW-0378">Hydrolase</keyword>
<keyword id="KW-0964">Secreted</keyword>
<keyword id="KW-0719">Serine esterase</keyword>
<keyword id="KW-0732">Signal</keyword>
<gene>
    <name evidence="5" type="primary">cut1</name>
</gene>
<protein>
    <recommendedName>
        <fullName evidence="5">Cutinase cut1</fullName>
        <ecNumber evidence="7">3.1.1.74</ecNumber>
    </recommendedName>
    <alternativeName>
        <fullName evidence="5">Thcut1</fullName>
    </alternativeName>
</protein>
<name>CUTI1_TRIHA</name>
<sequence length="248" mass="26007">MRSLSLFTALLAGQAFAYPKPVLQSSTRRDWPTINEFLTELAEIMPIGDTVSAACDLIGDAEDVAADLFDISNTENDACGDVTVLFARGTCDPGNVGVLVGPWFFNSLETALPNKKVGVKGVPYPASVQGFLSGSVQPGIDMANQIKSVISSCPNTKLVLGGYSQGSMVVHNAASNLDAATMAKVSAVVLFGDPYDGRPVANYDASKVLVVCHDGDNICQGGDFILLPHLTYAEDADTAAAFVKPLVS</sequence>
<proteinExistence type="evidence at protein level"/>